<feature type="chain" id="PRO_0000055527" description="Unknown protein from spot 67 of 2D-PAGE of etiolated coleoptile">
    <location>
        <begin position="1" status="less than"/>
        <end position="19" status="greater than"/>
    </location>
</feature>
<feature type="non-consecutive residues" evidence="1">
    <location>
        <begin position="10"/>
        <end position="11"/>
    </location>
</feature>
<feature type="non-terminal residue">
    <location>
        <position position="1"/>
    </location>
</feature>
<feature type="non-terminal residue">
    <location>
        <position position="19"/>
    </location>
</feature>
<name>UC31_MAIZE</name>
<organism>
    <name type="scientific">Zea mays</name>
    <name type="common">Maize</name>
    <dbReference type="NCBI Taxonomy" id="4577"/>
    <lineage>
        <taxon>Eukaryota</taxon>
        <taxon>Viridiplantae</taxon>
        <taxon>Streptophyta</taxon>
        <taxon>Embryophyta</taxon>
        <taxon>Tracheophyta</taxon>
        <taxon>Spermatophyta</taxon>
        <taxon>Magnoliopsida</taxon>
        <taxon>Liliopsida</taxon>
        <taxon>Poales</taxon>
        <taxon>Poaceae</taxon>
        <taxon>PACMAD clade</taxon>
        <taxon>Panicoideae</taxon>
        <taxon>Andropogonodae</taxon>
        <taxon>Andropogoneae</taxon>
        <taxon>Tripsacinae</taxon>
        <taxon>Zea</taxon>
    </lineage>
</organism>
<reference key="1">
    <citation type="journal article" date="1996" name="Theor. Appl. Genet.">
        <title>The maize two dimensional gel protein database: towards an integrated genome analysis program.</title>
        <authorList>
            <person name="Touzet P."/>
            <person name="Riccardi F."/>
            <person name="Morin C."/>
            <person name="Damerval C."/>
            <person name="Huet J.-C."/>
            <person name="Pernollet J.-C."/>
            <person name="Zivy M."/>
            <person name="de Vienne D."/>
        </authorList>
        <dbReference type="AGRICOLA" id="IND20551642"/>
    </citation>
    <scope>PROTEIN SEQUENCE</scope>
    <source>
        <tissue>Coleoptile</tissue>
    </source>
</reference>
<protein>
    <recommendedName>
        <fullName>Unknown protein from spot 67 of 2D-PAGE of etiolated coleoptile</fullName>
    </recommendedName>
</protein>
<proteinExistence type="evidence at protein level"/>
<sequence length="19" mass="2442">WILHDWDEDKXXXPYYNTI</sequence>
<evidence type="ECO:0000305" key="1"/>
<keyword id="KW-0903">Direct protein sequencing</keyword>
<keyword id="KW-1185">Reference proteome</keyword>
<accession>P80637</accession>
<dbReference type="MaizeGDB" id="123962"/>
<dbReference type="InParanoid" id="P80637"/>
<dbReference type="Proteomes" id="UP000007305">
    <property type="component" value="Unplaced"/>
</dbReference>
<comment type="miscellaneous">
    <text>On the 2D-gel the determined pI of this unknown protein is: 5.8, its MW is: 41.7 kDa.</text>
</comment>
<comment type="caution">
    <text evidence="1">The order of the peptides shown is unknown.</text>
</comment>